<name>GELL_GEOSE</name>
<protein>
    <recommendedName>
        <fullName>Gellan lyase</fullName>
        <ecNumber>4.2.2.25</ecNumber>
    </recommendedName>
</protein>
<reference evidence="5" key="1">
    <citation type="journal article" date="2008" name="Eur. J. Biochem.">
        <title>Primary structure analysis of a purified thermostable gellan lyase produced by Bulgarian geothermal spring inhabitant Geobacillus stearothermophilus 98.</title>
        <authorList>
            <person name="Atanassova M."/>
            <person name="Rodriguez-Alonso P."/>
            <person name="Garabal J.I."/>
            <person name="Derekova A."/>
            <person name="Terziiska A."/>
            <person name="Mandeva R."/>
            <person name="Kambourova M."/>
        </authorList>
    </citation>
    <scope>PROTEIN SEQUENCE</scope>
    <scope>FUNCTION</scope>
    <source>
        <strain evidence="3">98</strain>
    </source>
</reference>
<reference evidence="5" key="2">
    <citation type="journal article" date="2006" name="Extremophiles">
        <title>Biosynthesis of a thermostable gellan lyase by newly isolated and characterized strain of Geobacillus stearothermophilus 98.</title>
        <authorList>
            <person name="Derekova A."/>
            <person name="Sjoholm C."/>
            <person name="Mandeva R."/>
            <person name="Michailova L."/>
            <person name="Kambourova M."/>
        </authorList>
    </citation>
    <scope>FUNCTION</scope>
    <scope>ACTIVITY REGULATION</scope>
    <scope>BIOPHYSICOCHEMICAL PROPERTIES</scope>
    <scope>SUBUNIT</scope>
    <scope>SUBCELLULAR LOCATION</scope>
    <scope>DEVELOPMENTAL STAGE</scope>
    <scope>INDUCTION</scope>
</reference>
<reference key="3">
    <citation type="journal article" date="2010" name="Z. Naturforsch. C Biosci.">
        <title>Physicochemical characteristics of a thermostable gellan lyase from Geobacillus stearothermophilus 98.</title>
        <authorList>
            <person name="Derekova A."/>
            <person name="Atanassova M."/>
            <person name="Christova P."/>
            <person name="Tchorbanov B."/>
            <person name="Shosheva A."/>
            <person name="Mandeva R."/>
            <person name="Rodriguez-Alonso P."/>
            <person name="Garabal J.I."/>
            <person name="Kambourova M."/>
        </authorList>
    </citation>
    <scope>FUNCTION</scope>
    <scope>BIOPHYSICOCHEMICAL PROPERTIES</scope>
    <source>
        <strain>98</strain>
    </source>
</reference>
<feature type="chain" id="PRO_0000367894" description="Gellan lyase">
    <location>
        <begin position="1" status="less than"/>
        <end position="204" status="greater than"/>
    </location>
</feature>
<feature type="non-consecutive residues" evidence="4">
    <location>
        <begin position="9"/>
        <end position="10"/>
    </location>
</feature>
<feature type="non-consecutive residues" evidence="4">
    <location>
        <begin position="21"/>
        <end position="22"/>
    </location>
</feature>
<feature type="non-consecutive residues" evidence="4">
    <location>
        <begin position="35"/>
        <end position="36"/>
    </location>
</feature>
<feature type="non-consecutive residues" evidence="4">
    <location>
        <begin position="51"/>
        <end position="52"/>
    </location>
</feature>
<feature type="non-consecutive residues" evidence="4">
    <location>
        <begin position="64"/>
        <end position="65"/>
    </location>
</feature>
<feature type="non-consecutive residues" evidence="4">
    <location>
        <begin position="82"/>
        <end position="83"/>
    </location>
</feature>
<feature type="non-consecutive residues" evidence="4">
    <location>
        <begin position="97"/>
        <end position="98"/>
    </location>
</feature>
<feature type="non-consecutive residues" evidence="4">
    <location>
        <begin position="117"/>
        <end position="118"/>
    </location>
</feature>
<feature type="non-consecutive residues" evidence="4">
    <location>
        <begin position="127"/>
        <end position="128"/>
    </location>
</feature>
<feature type="non-consecutive residues" evidence="4">
    <location>
        <begin position="151"/>
        <end position="152"/>
    </location>
</feature>
<feature type="non-consecutive residues" evidence="4">
    <location>
        <begin position="164"/>
        <end position="165"/>
    </location>
</feature>
<feature type="non-consecutive residues" evidence="4">
    <location>
        <begin position="190"/>
        <end position="191"/>
    </location>
</feature>
<feature type="non-terminal residue" evidence="4">
    <location>
        <position position="1"/>
    </location>
</feature>
<feature type="non-terminal residue" evidence="4">
    <location>
        <position position="204"/>
    </location>
</feature>
<proteinExistence type="evidence at protein level"/>
<comment type="function">
    <text evidence="1 2 3">Cleaves the glycosidic bonds of gellan backbone and releases tetrasaccharide units of glucuronyl-glucosyl-rhamnosyl-glucose with unsaturated glucuronic acid at the non-reducing terminal. The enzyme is highly specific to the heteropolysaccharide gellan.</text>
</comment>
<comment type="catalytic activity">
    <reaction>
        <text>Eliminative cleavage of beta-D-glucopyranosyl-(1-&gt;4)-beta-D-glucopyranosyluronate bonds of gellan backbone releasing tetrasaccharides containing a 4-deoxy-4,5-unsaturated D-glucopyranosyluronic acid at the non-reducing end. The tetrasaccharide produced from deacetylated gellan is beta-D-4-deoxy-Delta(4)-GlcAp-(1-&gt;4)-beta-D-Glcp-(1-&gt;4)-alpha-L-Rhap-(1-&gt;3)-beta-D-Glcp.</text>
        <dbReference type="EC" id="4.2.2.25"/>
    </reaction>
</comment>
<comment type="activity regulation">
    <text evidence="1">Activity is stimulated by zinc, potassium, lithium, cobalt, sodium, calcium, iron, manganase, magnesium and mercury ions at a concentration of 1 mM, but inhibited by copper ions at a concentration of 1 mM. Activity is inhibited by potassium, sodium and magnesium ions at a concentration of 1 M. Activity is inhibited by urea, EDTA, dithiothreitol, p-CMB, PSF, natrium lauryl sulfate and N-bromosuccinimide.</text>
</comment>
<comment type="biophysicochemical properties">
    <kinetics>
        <KM evidence="1 2">0.21 uM for gellan</KM>
    </kinetics>
    <phDependence>
        <text evidence="1 2">Most active from pH 5.0 to 8.0.</text>
    </phDependence>
    <temperatureDependence>
        <text evidence="1 2">Optimum temperature is 70 degrees Celsius. Active from 50 to 80 degrees Celsius, at 55 degrees Celsius it has 50% of its full activity. Thermostable, retains full activity after heating at 60 degrees Celsius for 24 hours. In the absence of substrate, its half life at 70 degrees Celsius is 50 minutes. In the presence of substrate full activity is retained after incubation at 70 degrees Celsius for 2.5 hours.</text>
    </temperatureDependence>
</comment>
<comment type="subunit">
    <text evidence="1">Multimer.</text>
</comment>
<comment type="subcellular location">
    <subcellularLocation>
        <location evidence="1">Secreted</location>
    </subcellularLocation>
</comment>
<comment type="developmental stage">
    <text evidence="1">Expressed in the exponential growth phase.</text>
</comment>
<comment type="induction">
    <text evidence="1">By gellan.</text>
</comment>
<comment type="caution">
    <text evidence="1">The order of the peptides shown is unknown.</text>
</comment>
<keyword id="KW-0903">Direct protein sequencing</keyword>
<keyword id="KW-0456">Lyase</keyword>
<keyword id="KW-0964">Secreted</keyword>
<evidence type="ECO:0000269" key="1">
    <source>
    </source>
</evidence>
<evidence type="ECO:0000269" key="2">
    <source>
    </source>
</evidence>
<evidence type="ECO:0000269" key="3">
    <source ref="1"/>
</evidence>
<evidence type="ECO:0000303" key="4">
    <source ref="1"/>
</evidence>
<evidence type="ECO:0000305" key="5"/>
<organism>
    <name type="scientific">Geobacillus stearothermophilus</name>
    <name type="common">Bacillus stearothermophilus</name>
    <dbReference type="NCBI Taxonomy" id="1422"/>
    <lineage>
        <taxon>Bacteria</taxon>
        <taxon>Bacillati</taxon>
        <taxon>Bacillota</taxon>
        <taxon>Bacilli</taxon>
        <taxon>Bacillales</taxon>
        <taxon>Anoxybacillaceae</taxon>
        <taxon>Geobacillus</taxon>
    </lineage>
</organism>
<accession>P85513</accession>
<dbReference type="EC" id="4.2.2.25"/>
<dbReference type="BRENDA" id="4.2.2.25">
    <property type="organism ID" value="623"/>
</dbReference>
<dbReference type="GO" id="GO:0005576">
    <property type="term" value="C:extracellular region"/>
    <property type="evidence" value="ECO:0007669"/>
    <property type="project" value="UniProtKB-SubCell"/>
</dbReference>
<dbReference type="GO" id="GO:0052762">
    <property type="term" value="F:gellan lyase activity"/>
    <property type="evidence" value="ECO:0007669"/>
    <property type="project" value="UniProtKB-EC"/>
</dbReference>
<sequence>LVSESNPGRAIPAGGKGATIRAARPGLATTLNGPKAGNGTTGATKLTTPARPLSEGANMMCDHRAGGNAAISGSSVGEGTARAGDSKVMSRMLSPKGSIIAGTVNMMPADIAAGSVRTPSSLPPDGRSATPMSVSEVASDISHKDGSVNVTKDPVTAAGLTAMRKNANKGSPPASPLPLKADNKGVHINKHWVDLKNDNDFNTR</sequence>